<feature type="chain" id="PRO_0000272848" description="Large ribosomal subunit protein uL23">
    <location>
        <begin position="1"/>
        <end position="98"/>
    </location>
</feature>
<evidence type="ECO:0000255" key="1">
    <source>
        <dbReference type="HAMAP-Rule" id="MF_01369"/>
    </source>
</evidence>
<evidence type="ECO:0000305" key="2"/>
<sequence>MSAKAEHYDVIRKPIITEKSTMASENGAVVFEVAIDSNKPQIKEAVEALFGVKVKAVNTTVTKGKVKRFRGQLGKRKDVKKAYVTLEEGNTIDVSTGL</sequence>
<organism>
    <name type="scientific">Ruegeria sp. (strain TM1040)</name>
    <name type="common">Silicibacter sp.</name>
    <dbReference type="NCBI Taxonomy" id="292414"/>
    <lineage>
        <taxon>Bacteria</taxon>
        <taxon>Pseudomonadati</taxon>
        <taxon>Pseudomonadota</taxon>
        <taxon>Alphaproteobacteria</taxon>
        <taxon>Rhodobacterales</taxon>
        <taxon>Roseobacteraceae</taxon>
        <taxon>Ruegeria</taxon>
    </lineage>
</organism>
<gene>
    <name evidence="1" type="primary">rplW</name>
    <name type="ordered locus">TM1040_0248</name>
</gene>
<comment type="function">
    <text evidence="1">One of the early assembly proteins it binds 23S rRNA. One of the proteins that surrounds the polypeptide exit tunnel on the outside of the ribosome. Forms the main docking site for trigger factor binding to the ribosome.</text>
</comment>
<comment type="subunit">
    <text evidence="1">Part of the 50S ribosomal subunit. Contacts protein L29, and trigger factor when it is bound to the ribosome.</text>
</comment>
<comment type="similarity">
    <text evidence="1">Belongs to the universal ribosomal protein uL23 family.</text>
</comment>
<accession>Q1GK35</accession>
<reference key="1">
    <citation type="submission" date="2006-05" db="EMBL/GenBank/DDBJ databases">
        <title>Complete sequence of chromosome of Silicibacter sp. TM1040.</title>
        <authorList>
            <consortium name="US DOE Joint Genome Institute"/>
            <person name="Copeland A."/>
            <person name="Lucas S."/>
            <person name="Lapidus A."/>
            <person name="Barry K."/>
            <person name="Detter J.C."/>
            <person name="Glavina del Rio T."/>
            <person name="Hammon N."/>
            <person name="Israni S."/>
            <person name="Dalin E."/>
            <person name="Tice H."/>
            <person name="Pitluck S."/>
            <person name="Brettin T."/>
            <person name="Bruce D."/>
            <person name="Han C."/>
            <person name="Tapia R."/>
            <person name="Goodwin L."/>
            <person name="Thompson L.S."/>
            <person name="Gilna P."/>
            <person name="Schmutz J."/>
            <person name="Larimer F."/>
            <person name="Land M."/>
            <person name="Hauser L."/>
            <person name="Kyrpides N."/>
            <person name="Kim E."/>
            <person name="Belas R."/>
            <person name="Moran M.A."/>
            <person name="Buchan A."/>
            <person name="Gonzalez J.M."/>
            <person name="Schell M.A."/>
            <person name="Sun F."/>
            <person name="Richardson P."/>
        </authorList>
    </citation>
    <scope>NUCLEOTIDE SEQUENCE [LARGE SCALE GENOMIC DNA]</scope>
    <source>
        <strain>TM1040</strain>
    </source>
</reference>
<proteinExistence type="inferred from homology"/>
<protein>
    <recommendedName>
        <fullName evidence="1">Large ribosomal subunit protein uL23</fullName>
    </recommendedName>
    <alternativeName>
        <fullName evidence="2">50S ribosomal protein L23</fullName>
    </alternativeName>
</protein>
<name>RL23_RUEST</name>
<dbReference type="EMBL" id="CP000377">
    <property type="protein sequence ID" value="ABF62981.1"/>
    <property type="molecule type" value="Genomic_DNA"/>
</dbReference>
<dbReference type="RefSeq" id="WP_009176651.1">
    <property type="nucleotide sequence ID" value="NC_008044.1"/>
</dbReference>
<dbReference type="SMR" id="Q1GK35"/>
<dbReference type="STRING" id="292414.TM1040_0248"/>
<dbReference type="KEGG" id="sit:TM1040_0248"/>
<dbReference type="eggNOG" id="COG0089">
    <property type="taxonomic scope" value="Bacteria"/>
</dbReference>
<dbReference type="HOGENOM" id="CLU_037562_3_1_5"/>
<dbReference type="OrthoDB" id="9793353at2"/>
<dbReference type="Proteomes" id="UP000000636">
    <property type="component" value="Chromosome"/>
</dbReference>
<dbReference type="GO" id="GO:1990904">
    <property type="term" value="C:ribonucleoprotein complex"/>
    <property type="evidence" value="ECO:0007669"/>
    <property type="project" value="UniProtKB-KW"/>
</dbReference>
<dbReference type="GO" id="GO:0005840">
    <property type="term" value="C:ribosome"/>
    <property type="evidence" value="ECO:0007669"/>
    <property type="project" value="UniProtKB-KW"/>
</dbReference>
<dbReference type="GO" id="GO:0019843">
    <property type="term" value="F:rRNA binding"/>
    <property type="evidence" value="ECO:0007669"/>
    <property type="project" value="UniProtKB-UniRule"/>
</dbReference>
<dbReference type="GO" id="GO:0003735">
    <property type="term" value="F:structural constituent of ribosome"/>
    <property type="evidence" value="ECO:0007669"/>
    <property type="project" value="InterPro"/>
</dbReference>
<dbReference type="GO" id="GO:0006412">
    <property type="term" value="P:translation"/>
    <property type="evidence" value="ECO:0007669"/>
    <property type="project" value="UniProtKB-UniRule"/>
</dbReference>
<dbReference type="FunFam" id="3.30.70.330:FF:000001">
    <property type="entry name" value="50S ribosomal protein L23"/>
    <property type="match status" value="1"/>
</dbReference>
<dbReference type="Gene3D" id="3.30.70.330">
    <property type="match status" value="1"/>
</dbReference>
<dbReference type="HAMAP" id="MF_01369_B">
    <property type="entry name" value="Ribosomal_uL23_B"/>
    <property type="match status" value="1"/>
</dbReference>
<dbReference type="InterPro" id="IPR012677">
    <property type="entry name" value="Nucleotide-bd_a/b_plait_sf"/>
</dbReference>
<dbReference type="InterPro" id="IPR013025">
    <property type="entry name" value="Ribosomal_uL23-like"/>
</dbReference>
<dbReference type="InterPro" id="IPR012678">
    <property type="entry name" value="Ribosomal_uL23/eL15/eS24_sf"/>
</dbReference>
<dbReference type="NCBIfam" id="NF004359">
    <property type="entry name" value="PRK05738.1-3"/>
    <property type="match status" value="1"/>
</dbReference>
<dbReference type="NCBIfam" id="NF004360">
    <property type="entry name" value="PRK05738.1-5"/>
    <property type="match status" value="1"/>
</dbReference>
<dbReference type="NCBIfam" id="NF004363">
    <property type="entry name" value="PRK05738.2-4"/>
    <property type="match status" value="1"/>
</dbReference>
<dbReference type="PANTHER" id="PTHR11620">
    <property type="entry name" value="60S RIBOSOMAL PROTEIN L23A"/>
    <property type="match status" value="1"/>
</dbReference>
<dbReference type="Pfam" id="PF00276">
    <property type="entry name" value="Ribosomal_L23"/>
    <property type="match status" value="1"/>
</dbReference>
<dbReference type="SUPFAM" id="SSF54189">
    <property type="entry name" value="Ribosomal proteins S24e, L23 and L15e"/>
    <property type="match status" value="1"/>
</dbReference>
<keyword id="KW-1185">Reference proteome</keyword>
<keyword id="KW-0687">Ribonucleoprotein</keyword>
<keyword id="KW-0689">Ribosomal protein</keyword>
<keyword id="KW-0694">RNA-binding</keyword>
<keyword id="KW-0699">rRNA-binding</keyword>